<feature type="chain" id="PRO_1000012947" description="Lysine--tRNA ligase">
    <location>
        <begin position="1"/>
        <end position="497"/>
    </location>
</feature>
<feature type="binding site" evidence="1">
    <location>
        <position position="409"/>
    </location>
    <ligand>
        <name>Mg(2+)</name>
        <dbReference type="ChEBI" id="CHEBI:18420"/>
        <label>1</label>
    </ligand>
</feature>
<feature type="binding site" evidence="1">
    <location>
        <position position="416"/>
    </location>
    <ligand>
        <name>Mg(2+)</name>
        <dbReference type="ChEBI" id="CHEBI:18420"/>
        <label>1</label>
    </ligand>
</feature>
<feature type="binding site" evidence="1">
    <location>
        <position position="416"/>
    </location>
    <ligand>
        <name>Mg(2+)</name>
        <dbReference type="ChEBI" id="CHEBI:18420"/>
        <label>2</label>
    </ligand>
</feature>
<name>SYK_STRPG</name>
<proteinExistence type="inferred from homology"/>
<comment type="catalytic activity">
    <reaction evidence="1">
        <text>tRNA(Lys) + L-lysine + ATP = L-lysyl-tRNA(Lys) + AMP + diphosphate</text>
        <dbReference type="Rhea" id="RHEA:20792"/>
        <dbReference type="Rhea" id="RHEA-COMP:9696"/>
        <dbReference type="Rhea" id="RHEA-COMP:9697"/>
        <dbReference type="ChEBI" id="CHEBI:30616"/>
        <dbReference type="ChEBI" id="CHEBI:32551"/>
        <dbReference type="ChEBI" id="CHEBI:33019"/>
        <dbReference type="ChEBI" id="CHEBI:78442"/>
        <dbReference type="ChEBI" id="CHEBI:78529"/>
        <dbReference type="ChEBI" id="CHEBI:456215"/>
        <dbReference type="EC" id="6.1.1.6"/>
    </reaction>
</comment>
<comment type="cofactor">
    <cofactor evidence="1">
        <name>Mg(2+)</name>
        <dbReference type="ChEBI" id="CHEBI:18420"/>
    </cofactor>
    <text evidence="1">Binds 3 Mg(2+) ions per subunit.</text>
</comment>
<comment type="subunit">
    <text evidence="1">Homodimer.</text>
</comment>
<comment type="subcellular location">
    <subcellularLocation>
        <location evidence="1">Cytoplasm</location>
    </subcellularLocation>
</comment>
<comment type="similarity">
    <text evidence="1">Belongs to the class-II aminoacyl-tRNA synthetase family.</text>
</comment>
<keyword id="KW-0030">Aminoacyl-tRNA synthetase</keyword>
<keyword id="KW-0067">ATP-binding</keyword>
<keyword id="KW-0963">Cytoplasm</keyword>
<keyword id="KW-0436">Ligase</keyword>
<keyword id="KW-0460">Magnesium</keyword>
<keyword id="KW-0479">Metal-binding</keyword>
<keyword id="KW-0547">Nucleotide-binding</keyword>
<keyword id="KW-0648">Protein biosynthesis</keyword>
<reference key="1">
    <citation type="journal article" date="2007" name="J. Bacteriol.">
        <title>Complete genome of acute rheumatic fever-associated serotype M5 Streptococcus pyogenes strain Manfredo.</title>
        <authorList>
            <person name="Holden M.T.G."/>
            <person name="Scott A."/>
            <person name="Cherevach I."/>
            <person name="Chillingworth T."/>
            <person name="Churcher C."/>
            <person name="Cronin A."/>
            <person name="Dowd L."/>
            <person name="Feltwell T."/>
            <person name="Hamlin N."/>
            <person name="Holroyd S."/>
            <person name="Jagels K."/>
            <person name="Moule S."/>
            <person name="Mungall K."/>
            <person name="Quail M.A."/>
            <person name="Price C."/>
            <person name="Rabbinowitsch E."/>
            <person name="Sharp S."/>
            <person name="Skelton J."/>
            <person name="Whitehead S."/>
            <person name="Barrell B.G."/>
            <person name="Kehoe M."/>
            <person name="Parkhill J."/>
        </authorList>
    </citation>
    <scope>NUCLEOTIDE SEQUENCE [LARGE SCALE GENOMIC DNA]</scope>
    <source>
        <strain>Manfredo</strain>
    </source>
</reference>
<evidence type="ECO:0000255" key="1">
    <source>
        <dbReference type="HAMAP-Rule" id="MF_00252"/>
    </source>
</evidence>
<accession>A2RFR7</accession>
<sequence length="497" mass="56647">MSNQHIEELNDQQIVRREKMMALAEQGIDPFGKRFDRTANSAELKEKYADKTKEELHELNETAIVAGRLMTKRGKGKVGFAHLQDREGQIQLYVRKDSVSEDNYEIFKKADLGDFIGVEGEVMRTDMGELSIKATKLTHLSKSLRPLPEKFHGLTDIETIYRKRHLDLISNRESFDRFVTRSKMISEIRRYLDGLDFLEVETPVLHNEAGGAAARPFVTHHNAQNIDMVLRIATELHLKRLIVGGMERVYEIGRIFRNEGMDATHNPEFTSIEVYQAYADYLDIMNLTEGIIQHAAKAVKGDGPIDYQGTEIRINEPFKRVHMVDAIKEVTGVDFWPEMTVEEAIALAKEKQVPLEKHFTSVGHIINAFFEEFVEETLVQPTFVFGHPVEVSPLAKKNPEDTRFTDRFELFIMTKEYANAFTELNDPIDQLSRFEAQAQAKELGDDEATGIDYDFVEALEYGMPPTGGLGIGIDRLCMLLTNTTTIRDVLLFPTMKP</sequence>
<protein>
    <recommendedName>
        <fullName evidence="1">Lysine--tRNA ligase</fullName>
        <ecNumber evidence="1">6.1.1.6</ecNumber>
    </recommendedName>
    <alternativeName>
        <fullName evidence="1">Lysyl-tRNA synthetase</fullName>
        <shortName evidence="1">LysRS</shortName>
    </alternativeName>
</protein>
<dbReference type="EC" id="6.1.1.6" evidence="1"/>
<dbReference type="EMBL" id="AM295007">
    <property type="protein sequence ID" value="CAM30696.1"/>
    <property type="molecule type" value="Genomic_DNA"/>
</dbReference>
<dbReference type="RefSeq" id="WP_011017531.1">
    <property type="nucleotide sequence ID" value="NC_009332.1"/>
</dbReference>
<dbReference type="SMR" id="A2RFR7"/>
<dbReference type="KEGG" id="spf:SpyM51368"/>
<dbReference type="HOGENOM" id="CLU_008255_6_0_9"/>
<dbReference type="GO" id="GO:0005829">
    <property type="term" value="C:cytosol"/>
    <property type="evidence" value="ECO:0007669"/>
    <property type="project" value="TreeGrafter"/>
</dbReference>
<dbReference type="GO" id="GO:0005524">
    <property type="term" value="F:ATP binding"/>
    <property type="evidence" value="ECO:0007669"/>
    <property type="project" value="UniProtKB-UniRule"/>
</dbReference>
<dbReference type="GO" id="GO:0140096">
    <property type="term" value="F:catalytic activity, acting on a protein"/>
    <property type="evidence" value="ECO:0007669"/>
    <property type="project" value="UniProtKB-ARBA"/>
</dbReference>
<dbReference type="GO" id="GO:0004824">
    <property type="term" value="F:lysine-tRNA ligase activity"/>
    <property type="evidence" value="ECO:0007669"/>
    <property type="project" value="UniProtKB-UniRule"/>
</dbReference>
<dbReference type="GO" id="GO:0000287">
    <property type="term" value="F:magnesium ion binding"/>
    <property type="evidence" value="ECO:0007669"/>
    <property type="project" value="UniProtKB-UniRule"/>
</dbReference>
<dbReference type="GO" id="GO:0016740">
    <property type="term" value="F:transferase activity"/>
    <property type="evidence" value="ECO:0007669"/>
    <property type="project" value="UniProtKB-ARBA"/>
</dbReference>
<dbReference type="GO" id="GO:0000049">
    <property type="term" value="F:tRNA binding"/>
    <property type="evidence" value="ECO:0007669"/>
    <property type="project" value="TreeGrafter"/>
</dbReference>
<dbReference type="GO" id="GO:0006430">
    <property type="term" value="P:lysyl-tRNA aminoacylation"/>
    <property type="evidence" value="ECO:0007669"/>
    <property type="project" value="UniProtKB-UniRule"/>
</dbReference>
<dbReference type="CDD" id="cd00775">
    <property type="entry name" value="LysRS_core"/>
    <property type="match status" value="1"/>
</dbReference>
<dbReference type="CDD" id="cd04322">
    <property type="entry name" value="LysRS_N"/>
    <property type="match status" value="1"/>
</dbReference>
<dbReference type="FunFam" id="2.40.50.140:FF:000024">
    <property type="entry name" value="Lysine--tRNA ligase"/>
    <property type="match status" value="1"/>
</dbReference>
<dbReference type="FunFam" id="3.30.930.10:FF:000001">
    <property type="entry name" value="Lysine--tRNA ligase"/>
    <property type="match status" value="1"/>
</dbReference>
<dbReference type="Gene3D" id="3.30.930.10">
    <property type="entry name" value="Bira Bifunctional Protein, Domain 2"/>
    <property type="match status" value="1"/>
</dbReference>
<dbReference type="Gene3D" id="2.40.50.140">
    <property type="entry name" value="Nucleic acid-binding proteins"/>
    <property type="match status" value="1"/>
</dbReference>
<dbReference type="HAMAP" id="MF_00252">
    <property type="entry name" value="Lys_tRNA_synth_class2"/>
    <property type="match status" value="1"/>
</dbReference>
<dbReference type="InterPro" id="IPR004364">
    <property type="entry name" value="Aa-tRNA-synt_II"/>
</dbReference>
<dbReference type="InterPro" id="IPR006195">
    <property type="entry name" value="aa-tRNA-synth_II"/>
</dbReference>
<dbReference type="InterPro" id="IPR045864">
    <property type="entry name" value="aa-tRNA-synth_II/BPL/LPL"/>
</dbReference>
<dbReference type="InterPro" id="IPR002313">
    <property type="entry name" value="Lys-tRNA-ligase_II"/>
</dbReference>
<dbReference type="InterPro" id="IPR044136">
    <property type="entry name" value="Lys-tRNA-ligase_II_N"/>
</dbReference>
<dbReference type="InterPro" id="IPR018149">
    <property type="entry name" value="Lys-tRNA-synth_II_C"/>
</dbReference>
<dbReference type="InterPro" id="IPR012340">
    <property type="entry name" value="NA-bd_OB-fold"/>
</dbReference>
<dbReference type="InterPro" id="IPR004365">
    <property type="entry name" value="NA-bd_OB_tRNA"/>
</dbReference>
<dbReference type="NCBIfam" id="TIGR00499">
    <property type="entry name" value="lysS_bact"/>
    <property type="match status" value="1"/>
</dbReference>
<dbReference type="NCBIfam" id="NF001756">
    <property type="entry name" value="PRK00484.1"/>
    <property type="match status" value="1"/>
</dbReference>
<dbReference type="PANTHER" id="PTHR42918:SF15">
    <property type="entry name" value="LYSINE--TRNA LIGASE, CHLOROPLASTIC_MITOCHONDRIAL"/>
    <property type="match status" value="1"/>
</dbReference>
<dbReference type="PANTHER" id="PTHR42918">
    <property type="entry name" value="LYSYL-TRNA SYNTHETASE"/>
    <property type="match status" value="1"/>
</dbReference>
<dbReference type="Pfam" id="PF00152">
    <property type="entry name" value="tRNA-synt_2"/>
    <property type="match status" value="1"/>
</dbReference>
<dbReference type="Pfam" id="PF01336">
    <property type="entry name" value="tRNA_anti-codon"/>
    <property type="match status" value="1"/>
</dbReference>
<dbReference type="PRINTS" id="PR00982">
    <property type="entry name" value="TRNASYNTHLYS"/>
</dbReference>
<dbReference type="SUPFAM" id="SSF55681">
    <property type="entry name" value="Class II aaRS and biotin synthetases"/>
    <property type="match status" value="1"/>
</dbReference>
<dbReference type="SUPFAM" id="SSF50249">
    <property type="entry name" value="Nucleic acid-binding proteins"/>
    <property type="match status" value="1"/>
</dbReference>
<dbReference type="PROSITE" id="PS50862">
    <property type="entry name" value="AA_TRNA_LIGASE_II"/>
    <property type="match status" value="1"/>
</dbReference>
<gene>
    <name evidence="1" type="primary">lysS</name>
    <name type="ordered locus">SpyM51368</name>
</gene>
<organism>
    <name type="scientific">Streptococcus pyogenes serotype M5 (strain Manfredo)</name>
    <dbReference type="NCBI Taxonomy" id="160491"/>
    <lineage>
        <taxon>Bacteria</taxon>
        <taxon>Bacillati</taxon>
        <taxon>Bacillota</taxon>
        <taxon>Bacilli</taxon>
        <taxon>Lactobacillales</taxon>
        <taxon>Streptococcaceae</taxon>
        <taxon>Streptococcus</taxon>
    </lineage>
</organism>